<accession>B7LC87</accession>
<gene>
    <name evidence="1" type="primary">ybiX</name>
    <name type="ordered locus">EC55989_0848</name>
</gene>
<name>YBIX_ECO55</name>
<reference key="1">
    <citation type="journal article" date="2009" name="PLoS Genet.">
        <title>Organised genome dynamics in the Escherichia coli species results in highly diverse adaptive paths.</title>
        <authorList>
            <person name="Touchon M."/>
            <person name="Hoede C."/>
            <person name="Tenaillon O."/>
            <person name="Barbe V."/>
            <person name="Baeriswyl S."/>
            <person name="Bidet P."/>
            <person name="Bingen E."/>
            <person name="Bonacorsi S."/>
            <person name="Bouchier C."/>
            <person name="Bouvet O."/>
            <person name="Calteau A."/>
            <person name="Chiapello H."/>
            <person name="Clermont O."/>
            <person name="Cruveiller S."/>
            <person name="Danchin A."/>
            <person name="Diard M."/>
            <person name="Dossat C."/>
            <person name="Karoui M.E."/>
            <person name="Frapy E."/>
            <person name="Garry L."/>
            <person name="Ghigo J.M."/>
            <person name="Gilles A.M."/>
            <person name="Johnson J."/>
            <person name="Le Bouguenec C."/>
            <person name="Lescat M."/>
            <person name="Mangenot S."/>
            <person name="Martinez-Jehanne V."/>
            <person name="Matic I."/>
            <person name="Nassif X."/>
            <person name="Oztas S."/>
            <person name="Petit M.A."/>
            <person name="Pichon C."/>
            <person name="Rouy Z."/>
            <person name="Ruf C.S."/>
            <person name="Schneider D."/>
            <person name="Tourret J."/>
            <person name="Vacherie B."/>
            <person name="Vallenet D."/>
            <person name="Medigue C."/>
            <person name="Rocha E.P.C."/>
            <person name="Denamur E."/>
        </authorList>
    </citation>
    <scope>NUCLEOTIDE SEQUENCE [LARGE SCALE GENOMIC DNA]</scope>
    <source>
        <strain>55989 / EAEC</strain>
    </source>
</reference>
<evidence type="ECO:0000255" key="1">
    <source>
        <dbReference type="HAMAP-Rule" id="MF_00657"/>
    </source>
</evidence>
<dbReference type="EC" id="1.14.11.-" evidence="1"/>
<dbReference type="EMBL" id="CU928145">
    <property type="protein sequence ID" value="CAU96714.1"/>
    <property type="molecule type" value="Genomic_DNA"/>
</dbReference>
<dbReference type="RefSeq" id="WP_000990161.1">
    <property type="nucleotide sequence ID" value="NC_011748.1"/>
</dbReference>
<dbReference type="SMR" id="B7LC87"/>
<dbReference type="KEGG" id="eck:EC55989_0848"/>
<dbReference type="HOGENOM" id="CLU_106663_0_0_6"/>
<dbReference type="Proteomes" id="UP000000746">
    <property type="component" value="Chromosome"/>
</dbReference>
<dbReference type="GO" id="GO:0016706">
    <property type="term" value="F:2-oxoglutarate-dependent dioxygenase activity"/>
    <property type="evidence" value="ECO:0007669"/>
    <property type="project" value="UniProtKB-UniRule"/>
</dbReference>
<dbReference type="GO" id="GO:0005506">
    <property type="term" value="F:iron ion binding"/>
    <property type="evidence" value="ECO:0007669"/>
    <property type="project" value="UniProtKB-UniRule"/>
</dbReference>
<dbReference type="GO" id="GO:0031418">
    <property type="term" value="F:L-ascorbic acid binding"/>
    <property type="evidence" value="ECO:0007669"/>
    <property type="project" value="UniProtKB-KW"/>
</dbReference>
<dbReference type="GO" id="GO:0006974">
    <property type="term" value="P:DNA damage response"/>
    <property type="evidence" value="ECO:0007669"/>
    <property type="project" value="TreeGrafter"/>
</dbReference>
<dbReference type="GO" id="GO:0006879">
    <property type="term" value="P:intracellular iron ion homeostasis"/>
    <property type="evidence" value="ECO:0007669"/>
    <property type="project" value="TreeGrafter"/>
</dbReference>
<dbReference type="FunFam" id="2.60.120.620:FF:000006">
    <property type="entry name" value="PKHD-type hydroxylase YbiX"/>
    <property type="match status" value="1"/>
</dbReference>
<dbReference type="FunFam" id="4.10.860.20:FF:000001">
    <property type="entry name" value="PKHD-type hydroxylase YbiX"/>
    <property type="match status" value="1"/>
</dbReference>
<dbReference type="Gene3D" id="2.60.120.620">
    <property type="entry name" value="q2cbj1_9rhob like domain"/>
    <property type="match status" value="1"/>
</dbReference>
<dbReference type="Gene3D" id="4.10.860.20">
    <property type="entry name" value="Rabenosyn, Rab binding domain"/>
    <property type="match status" value="1"/>
</dbReference>
<dbReference type="HAMAP" id="MF_00657">
    <property type="entry name" value="Hydroxyl_YbiX"/>
    <property type="match status" value="1"/>
</dbReference>
<dbReference type="InterPro" id="IPR005123">
    <property type="entry name" value="Oxoglu/Fe-dep_dioxygenase_dom"/>
</dbReference>
<dbReference type="InterPro" id="IPR041097">
    <property type="entry name" value="PKHD_C"/>
</dbReference>
<dbReference type="InterPro" id="IPR023550">
    <property type="entry name" value="PKHD_hydroxylase"/>
</dbReference>
<dbReference type="InterPro" id="IPR006620">
    <property type="entry name" value="Pro_4_hyd_alph"/>
</dbReference>
<dbReference type="InterPro" id="IPR044862">
    <property type="entry name" value="Pro_4_hyd_alph_FE2OG_OXY"/>
</dbReference>
<dbReference type="NCBIfam" id="NF003972">
    <property type="entry name" value="PRK05467.1-1"/>
    <property type="match status" value="1"/>
</dbReference>
<dbReference type="NCBIfam" id="NF003974">
    <property type="entry name" value="PRK05467.1-3"/>
    <property type="match status" value="1"/>
</dbReference>
<dbReference type="NCBIfam" id="NF003975">
    <property type="entry name" value="PRK05467.1-4"/>
    <property type="match status" value="1"/>
</dbReference>
<dbReference type="PANTHER" id="PTHR41536">
    <property type="entry name" value="PKHD-TYPE HYDROXYLASE YBIX"/>
    <property type="match status" value="1"/>
</dbReference>
<dbReference type="PANTHER" id="PTHR41536:SF1">
    <property type="entry name" value="PKHD-TYPE HYDROXYLASE YBIX"/>
    <property type="match status" value="1"/>
</dbReference>
<dbReference type="Pfam" id="PF13640">
    <property type="entry name" value="2OG-FeII_Oxy_3"/>
    <property type="match status" value="1"/>
</dbReference>
<dbReference type="Pfam" id="PF18331">
    <property type="entry name" value="PKHD_C"/>
    <property type="match status" value="1"/>
</dbReference>
<dbReference type="SMART" id="SM00702">
    <property type="entry name" value="P4Hc"/>
    <property type="match status" value="1"/>
</dbReference>
<dbReference type="SUPFAM" id="SSF51197">
    <property type="entry name" value="Clavaminate synthase-like"/>
    <property type="match status" value="1"/>
</dbReference>
<dbReference type="PROSITE" id="PS51471">
    <property type="entry name" value="FE2OG_OXY"/>
    <property type="match status" value="1"/>
</dbReference>
<comment type="cofactor">
    <cofactor evidence="1">
        <name>Fe(2+)</name>
        <dbReference type="ChEBI" id="CHEBI:29033"/>
    </cofactor>
    <text evidence="1">Binds 1 Fe(2+) ion per subunit.</text>
</comment>
<comment type="cofactor">
    <cofactor evidence="1">
        <name>L-ascorbate</name>
        <dbReference type="ChEBI" id="CHEBI:38290"/>
    </cofactor>
</comment>
<proteinExistence type="inferred from homology"/>
<protein>
    <recommendedName>
        <fullName evidence="1">PKHD-type hydroxylase YbiX</fullName>
        <ecNumber evidence="1">1.14.11.-</ecNumber>
    </recommendedName>
</protein>
<organism>
    <name type="scientific">Escherichia coli (strain 55989 / EAEC)</name>
    <dbReference type="NCBI Taxonomy" id="585055"/>
    <lineage>
        <taxon>Bacteria</taxon>
        <taxon>Pseudomonadati</taxon>
        <taxon>Pseudomonadota</taxon>
        <taxon>Gammaproteobacteria</taxon>
        <taxon>Enterobacterales</taxon>
        <taxon>Enterobacteriaceae</taxon>
        <taxon>Escherichia</taxon>
    </lineage>
</organism>
<sequence>MMYHIPGVLSPQDVARFREQLEQAEWVDGRITTGAQGAQVKNNQQVDTRSTLYAALQNEVLNAVNQNALFFAAALPRTLSTPLFNRYQNNETYGFHVDGAVRSHPQNGWMRTDLSATLFLSDPQSYDGGELVVNDTFGQHRVKLPAGDLVLYPSSSLHCVTPVTRGVRVASFMWIQSMIRDDKKRAMLFELDNNIQSLKSRYGESEEILSLLNLYHNLLREWSEI</sequence>
<feature type="chain" id="PRO_1000147525" description="PKHD-type hydroxylase YbiX">
    <location>
        <begin position="1"/>
        <end position="225"/>
    </location>
</feature>
<feature type="domain" description="Fe2OG dioxygenase" evidence="1">
    <location>
        <begin position="78"/>
        <end position="177"/>
    </location>
</feature>
<feature type="binding site" evidence="1">
    <location>
        <position position="96"/>
    </location>
    <ligand>
        <name>Fe cation</name>
        <dbReference type="ChEBI" id="CHEBI:24875"/>
    </ligand>
</feature>
<feature type="binding site" evidence="1">
    <location>
        <position position="98"/>
    </location>
    <ligand>
        <name>Fe cation</name>
        <dbReference type="ChEBI" id="CHEBI:24875"/>
    </ligand>
</feature>
<feature type="binding site" evidence="1">
    <location>
        <position position="158"/>
    </location>
    <ligand>
        <name>Fe cation</name>
        <dbReference type="ChEBI" id="CHEBI:24875"/>
    </ligand>
</feature>
<feature type="binding site" evidence="1">
    <location>
        <position position="168"/>
    </location>
    <ligand>
        <name>2-oxoglutarate</name>
        <dbReference type="ChEBI" id="CHEBI:16810"/>
    </ligand>
</feature>
<keyword id="KW-0223">Dioxygenase</keyword>
<keyword id="KW-0408">Iron</keyword>
<keyword id="KW-0479">Metal-binding</keyword>
<keyword id="KW-0560">Oxidoreductase</keyword>
<keyword id="KW-1185">Reference proteome</keyword>
<keyword id="KW-0847">Vitamin C</keyword>